<gene>
    <name type="ordered locus">SA0830</name>
</gene>
<reference key="1">
    <citation type="journal article" date="2001" name="Lancet">
        <title>Whole genome sequencing of meticillin-resistant Staphylococcus aureus.</title>
        <authorList>
            <person name="Kuroda M."/>
            <person name="Ohta T."/>
            <person name="Uchiyama I."/>
            <person name="Baba T."/>
            <person name="Yuzawa H."/>
            <person name="Kobayashi I."/>
            <person name="Cui L."/>
            <person name="Oguchi A."/>
            <person name="Aoki K."/>
            <person name="Nagai Y."/>
            <person name="Lian J.-Q."/>
            <person name="Ito T."/>
            <person name="Kanamori M."/>
            <person name="Matsumaru H."/>
            <person name="Maruyama A."/>
            <person name="Murakami H."/>
            <person name="Hosoyama A."/>
            <person name="Mizutani-Ui Y."/>
            <person name="Takahashi N.K."/>
            <person name="Sawano T."/>
            <person name="Inoue R."/>
            <person name="Kaito C."/>
            <person name="Sekimizu K."/>
            <person name="Hirakawa H."/>
            <person name="Kuhara S."/>
            <person name="Goto S."/>
            <person name="Yabuzaki J."/>
            <person name="Kanehisa M."/>
            <person name="Yamashita A."/>
            <person name="Oshima K."/>
            <person name="Furuya K."/>
            <person name="Yoshino C."/>
            <person name="Shiba T."/>
            <person name="Hattori M."/>
            <person name="Ogasawara N."/>
            <person name="Hayashi H."/>
            <person name="Hiramatsu K."/>
        </authorList>
    </citation>
    <scope>NUCLEOTIDE SEQUENCE [LARGE SCALE GENOMIC DNA]</scope>
    <source>
        <strain>N315</strain>
    </source>
</reference>
<comment type="subcellular location">
    <subcellularLocation>
        <location evidence="1">Cell membrane</location>
        <topology evidence="1">Multi-pass membrane protein</topology>
    </subcellularLocation>
</comment>
<comment type="similarity">
    <text evidence="1">Belongs to the UPF0344 family.</text>
</comment>
<accession>Q7A6H2</accession>
<dbReference type="EMBL" id="BA000018">
    <property type="protein sequence ID" value="BAB42069.1"/>
    <property type="molecule type" value="Genomic_DNA"/>
</dbReference>
<dbReference type="PIR" id="B89864">
    <property type="entry name" value="B89864"/>
</dbReference>
<dbReference type="RefSeq" id="WP_000902805.1">
    <property type="nucleotide sequence ID" value="NC_002745.2"/>
</dbReference>
<dbReference type="EnsemblBacteria" id="BAB42069">
    <property type="protein sequence ID" value="BAB42069"/>
    <property type="gene ID" value="BAB42069"/>
</dbReference>
<dbReference type="KEGG" id="sau:SA0830"/>
<dbReference type="HOGENOM" id="CLU_146641_2_0_9"/>
<dbReference type="GO" id="GO:0005886">
    <property type="term" value="C:plasma membrane"/>
    <property type="evidence" value="ECO:0007669"/>
    <property type="project" value="UniProtKB-SubCell"/>
</dbReference>
<dbReference type="HAMAP" id="MF_01536">
    <property type="entry name" value="UPF0344"/>
    <property type="match status" value="1"/>
</dbReference>
<dbReference type="InterPro" id="IPR010899">
    <property type="entry name" value="UPF0344"/>
</dbReference>
<dbReference type="NCBIfam" id="NF010195">
    <property type="entry name" value="PRK13673.1-2"/>
    <property type="match status" value="1"/>
</dbReference>
<dbReference type="NCBIfam" id="NF010199">
    <property type="entry name" value="PRK13673.1-6"/>
    <property type="match status" value="1"/>
</dbReference>
<dbReference type="Pfam" id="PF07457">
    <property type="entry name" value="DUF1516"/>
    <property type="match status" value="1"/>
</dbReference>
<sequence>MLHLHILSWVLAIILFIATYLNISKNQGGSPFFKPLHMILRLFMLLTLISGFWILIQSFMNGGANHMLLTLKMLCGVAVVGLMEVSIAKRKRHEQSHKMFWITMALIIITMVLGVILPLGPISKLFGIG</sequence>
<evidence type="ECO:0000255" key="1">
    <source>
        <dbReference type="HAMAP-Rule" id="MF_01536"/>
    </source>
</evidence>
<feature type="chain" id="PRO_0000105895" description="UPF0344 protein SA0830">
    <location>
        <begin position="1"/>
        <end position="129"/>
    </location>
</feature>
<feature type="transmembrane region" description="Helical" evidence="1">
    <location>
        <begin position="1"/>
        <end position="21"/>
    </location>
</feature>
<feature type="transmembrane region" description="Helical" evidence="1">
    <location>
        <begin position="36"/>
        <end position="56"/>
    </location>
</feature>
<feature type="transmembrane region" description="Helical" evidence="1">
    <location>
        <begin position="67"/>
        <end position="87"/>
    </location>
</feature>
<feature type="transmembrane region" description="Helical" evidence="1">
    <location>
        <begin position="99"/>
        <end position="119"/>
    </location>
</feature>
<keyword id="KW-1003">Cell membrane</keyword>
<keyword id="KW-0472">Membrane</keyword>
<keyword id="KW-0812">Transmembrane</keyword>
<keyword id="KW-1133">Transmembrane helix</keyword>
<protein>
    <recommendedName>
        <fullName evidence="1">UPF0344 protein SA0830</fullName>
    </recommendedName>
</protein>
<name>Y830_STAAN</name>
<organism>
    <name type="scientific">Staphylococcus aureus (strain N315)</name>
    <dbReference type="NCBI Taxonomy" id="158879"/>
    <lineage>
        <taxon>Bacteria</taxon>
        <taxon>Bacillati</taxon>
        <taxon>Bacillota</taxon>
        <taxon>Bacilli</taxon>
        <taxon>Bacillales</taxon>
        <taxon>Staphylococcaceae</taxon>
        <taxon>Staphylococcus</taxon>
    </lineage>
</organism>
<proteinExistence type="inferred from homology"/>